<proteinExistence type="evidence at transcript level"/>
<reference key="1">
    <citation type="submission" date="2001-10" db="EMBL/GenBank/DDBJ databases">
        <title>Arabidopsis thaliana transcription factor WRKY28.</title>
        <authorList>
            <person name="Ulker B."/>
            <person name="Kushnir S."/>
            <person name="Somssich I.E."/>
        </authorList>
    </citation>
    <scope>NUCLEOTIDE SEQUENCE [MRNA]</scope>
    <source>
        <strain>cv. Columbia</strain>
        <tissue>Flower</tissue>
    </source>
</reference>
<reference key="2">
    <citation type="journal article" date="1999" name="Nature">
        <title>Sequence and analysis of chromosome 4 of the plant Arabidopsis thaliana.</title>
        <authorList>
            <person name="Mayer K.F.X."/>
            <person name="Schueller C."/>
            <person name="Wambutt R."/>
            <person name="Murphy G."/>
            <person name="Volckaert G."/>
            <person name="Pohl T."/>
            <person name="Duesterhoeft A."/>
            <person name="Stiekema W."/>
            <person name="Entian K.-D."/>
            <person name="Terryn N."/>
            <person name="Harris B."/>
            <person name="Ansorge W."/>
            <person name="Brandt P."/>
            <person name="Grivell L.A."/>
            <person name="Rieger M."/>
            <person name="Weichselgartner M."/>
            <person name="de Simone V."/>
            <person name="Obermaier B."/>
            <person name="Mache R."/>
            <person name="Mueller M."/>
            <person name="Kreis M."/>
            <person name="Delseny M."/>
            <person name="Puigdomenech P."/>
            <person name="Watson M."/>
            <person name="Schmidtheini T."/>
            <person name="Reichert B."/>
            <person name="Portetelle D."/>
            <person name="Perez-Alonso M."/>
            <person name="Boutry M."/>
            <person name="Bancroft I."/>
            <person name="Vos P."/>
            <person name="Hoheisel J."/>
            <person name="Zimmermann W."/>
            <person name="Wedler H."/>
            <person name="Ridley P."/>
            <person name="Langham S.-A."/>
            <person name="McCullagh B."/>
            <person name="Bilham L."/>
            <person name="Robben J."/>
            <person name="van der Schueren J."/>
            <person name="Grymonprez B."/>
            <person name="Chuang Y.-J."/>
            <person name="Vandenbussche F."/>
            <person name="Braeken M."/>
            <person name="Weltjens I."/>
            <person name="Voet M."/>
            <person name="Bastiaens I."/>
            <person name="Aert R."/>
            <person name="Defoor E."/>
            <person name="Weitzenegger T."/>
            <person name="Bothe G."/>
            <person name="Ramsperger U."/>
            <person name="Hilbert H."/>
            <person name="Braun M."/>
            <person name="Holzer E."/>
            <person name="Brandt A."/>
            <person name="Peters S."/>
            <person name="van Staveren M."/>
            <person name="Dirkse W."/>
            <person name="Mooijman P."/>
            <person name="Klein Lankhorst R."/>
            <person name="Rose M."/>
            <person name="Hauf J."/>
            <person name="Koetter P."/>
            <person name="Berneiser S."/>
            <person name="Hempel S."/>
            <person name="Feldpausch M."/>
            <person name="Lamberth S."/>
            <person name="Van den Daele H."/>
            <person name="De Keyser A."/>
            <person name="Buysshaert C."/>
            <person name="Gielen J."/>
            <person name="Villarroel R."/>
            <person name="De Clercq R."/>
            <person name="van Montagu M."/>
            <person name="Rogers J."/>
            <person name="Cronin A."/>
            <person name="Quail M.A."/>
            <person name="Bray-Allen S."/>
            <person name="Clark L."/>
            <person name="Doggett J."/>
            <person name="Hall S."/>
            <person name="Kay M."/>
            <person name="Lennard N."/>
            <person name="McLay K."/>
            <person name="Mayes R."/>
            <person name="Pettett A."/>
            <person name="Rajandream M.A."/>
            <person name="Lyne M."/>
            <person name="Benes V."/>
            <person name="Rechmann S."/>
            <person name="Borkova D."/>
            <person name="Bloecker H."/>
            <person name="Scharfe M."/>
            <person name="Grimm M."/>
            <person name="Loehnert T.-H."/>
            <person name="Dose S."/>
            <person name="de Haan M."/>
            <person name="Maarse A.C."/>
            <person name="Schaefer M."/>
            <person name="Mueller-Auer S."/>
            <person name="Gabel C."/>
            <person name="Fuchs M."/>
            <person name="Fartmann B."/>
            <person name="Granderath K."/>
            <person name="Dauner D."/>
            <person name="Herzl A."/>
            <person name="Neumann S."/>
            <person name="Argiriou A."/>
            <person name="Vitale D."/>
            <person name="Liguori R."/>
            <person name="Piravandi E."/>
            <person name="Massenet O."/>
            <person name="Quigley F."/>
            <person name="Clabauld G."/>
            <person name="Muendlein A."/>
            <person name="Felber R."/>
            <person name="Schnabl S."/>
            <person name="Hiller R."/>
            <person name="Schmidt W."/>
            <person name="Lecharny A."/>
            <person name="Aubourg S."/>
            <person name="Chefdor F."/>
            <person name="Cooke R."/>
            <person name="Berger C."/>
            <person name="Monfort A."/>
            <person name="Casacuberta E."/>
            <person name="Gibbons T."/>
            <person name="Weber N."/>
            <person name="Vandenbol M."/>
            <person name="Bargues M."/>
            <person name="Terol J."/>
            <person name="Torres A."/>
            <person name="Perez-Perez A."/>
            <person name="Purnelle B."/>
            <person name="Bent E."/>
            <person name="Johnson S."/>
            <person name="Tacon D."/>
            <person name="Jesse T."/>
            <person name="Heijnen L."/>
            <person name="Schwarz S."/>
            <person name="Scholler P."/>
            <person name="Heber S."/>
            <person name="Francs P."/>
            <person name="Bielke C."/>
            <person name="Frishman D."/>
            <person name="Haase D."/>
            <person name="Lemcke K."/>
            <person name="Mewes H.-W."/>
            <person name="Stocker S."/>
            <person name="Zaccaria P."/>
            <person name="Bevan M."/>
            <person name="Wilson R.K."/>
            <person name="de la Bastide M."/>
            <person name="Habermann K."/>
            <person name="Parnell L."/>
            <person name="Dedhia N."/>
            <person name="Gnoj L."/>
            <person name="Schutz K."/>
            <person name="Huang E."/>
            <person name="Spiegel L."/>
            <person name="Sekhon M."/>
            <person name="Murray J."/>
            <person name="Sheet P."/>
            <person name="Cordes M."/>
            <person name="Abu-Threideh J."/>
            <person name="Stoneking T."/>
            <person name="Kalicki J."/>
            <person name="Graves T."/>
            <person name="Harmon G."/>
            <person name="Edwards J."/>
            <person name="Latreille P."/>
            <person name="Courtney L."/>
            <person name="Cloud J."/>
            <person name="Abbott A."/>
            <person name="Scott K."/>
            <person name="Johnson D."/>
            <person name="Minx P."/>
            <person name="Bentley D."/>
            <person name="Fulton B."/>
            <person name="Miller N."/>
            <person name="Greco T."/>
            <person name="Kemp K."/>
            <person name="Kramer J."/>
            <person name="Fulton L."/>
            <person name="Mardis E."/>
            <person name="Dante M."/>
            <person name="Pepin K."/>
            <person name="Hillier L.W."/>
            <person name="Nelson J."/>
            <person name="Spieth J."/>
            <person name="Ryan E."/>
            <person name="Andrews S."/>
            <person name="Geisel C."/>
            <person name="Layman D."/>
            <person name="Du H."/>
            <person name="Ali J."/>
            <person name="Berghoff A."/>
            <person name="Jones K."/>
            <person name="Drone K."/>
            <person name="Cotton M."/>
            <person name="Joshu C."/>
            <person name="Antonoiu B."/>
            <person name="Zidanic M."/>
            <person name="Strong C."/>
            <person name="Sun H."/>
            <person name="Lamar B."/>
            <person name="Yordan C."/>
            <person name="Ma P."/>
            <person name="Zhong J."/>
            <person name="Preston R."/>
            <person name="Vil D."/>
            <person name="Shekher M."/>
            <person name="Matero A."/>
            <person name="Shah R."/>
            <person name="Swaby I.K."/>
            <person name="O'Shaughnessy A."/>
            <person name="Rodriguez M."/>
            <person name="Hoffman J."/>
            <person name="Till S."/>
            <person name="Granat S."/>
            <person name="Shohdy N."/>
            <person name="Hasegawa A."/>
            <person name="Hameed A."/>
            <person name="Lodhi M."/>
            <person name="Johnson A."/>
            <person name="Chen E."/>
            <person name="Marra M.A."/>
            <person name="Martienssen R."/>
            <person name="McCombie W.R."/>
        </authorList>
    </citation>
    <scope>NUCLEOTIDE SEQUENCE [LARGE SCALE GENOMIC DNA]</scope>
    <source>
        <strain>cv. Columbia</strain>
    </source>
</reference>
<reference key="3">
    <citation type="journal article" date="2017" name="Plant J.">
        <title>Araport11: a complete reannotation of the Arabidopsis thaliana reference genome.</title>
        <authorList>
            <person name="Cheng C.Y."/>
            <person name="Krishnakumar V."/>
            <person name="Chan A.P."/>
            <person name="Thibaud-Nissen F."/>
            <person name="Schobel S."/>
            <person name="Town C.D."/>
        </authorList>
    </citation>
    <scope>GENOME REANNOTATION</scope>
    <source>
        <strain>cv. Columbia</strain>
    </source>
</reference>
<reference key="4">
    <citation type="journal article" date="2003" name="Science">
        <title>Empirical analysis of transcriptional activity in the Arabidopsis genome.</title>
        <authorList>
            <person name="Yamada K."/>
            <person name="Lim J."/>
            <person name="Dale J.M."/>
            <person name="Chen H."/>
            <person name="Shinn P."/>
            <person name="Palm C.J."/>
            <person name="Southwick A.M."/>
            <person name="Wu H.C."/>
            <person name="Kim C.J."/>
            <person name="Nguyen M."/>
            <person name="Pham P.K."/>
            <person name="Cheuk R.F."/>
            <person name="Karlin-Newmann G."/>
            <person name="Liu S.X."/>
            <person name="Lam B."/>
            <person name="Sakano H."/>
            <person name="Wu T."/>
            <person name="Yu G."/>
            <person name="Miranda M."/>
            <person name="Quach H.L."/>
            <person name="Tripp M."/>
            <person name="Chang C.H."/>
            <person name="Lee J.M."/>
            <person name="Toriumi M.J."/>
            <person name="Chan M.M."/>
            <person name="Tang C.C."/>
            <person name="Onodera C.S."/>
            <person name="Deng J.M."/>
            <person name="Akiyama K."/>
            <person name="Ansari Y."/>
            <person name="Arakawa T."/>
            <person name="Banh J."/>
            <person name="Banno F."/>
            <person name="Bowser L."/>
            <person name="Brooks S.Y."/>
            <person name="Carninci P."/>
            <person name="Chao Q."/>
            <person name="Choy N."/>
            <person name="Enju A."/>
            <person name="Goldsmith A.D."/>
            <person name="Gurjal M."/>
            <person name="Hansen N.F."/>
            <person name="Hayashizaki Y."/>
            <person name="Johnson-Hopson C."/>
            <person name="Hsuan V.W."/>
            <person name="Iida K."/>
            <person name="Karnes M."/>
            <person name="Khan S."/>
            <person name="Koesema E."/>
            <person name="Ishida J."/>
            <person name="Jiang P.X."/>
            <person name="Jones T."/>
            <person name="Kawai J."/>
            <person name="Kamiya A."/>
            <person name="Meyers C."/>
            <person name="Nakajima M."/>
            <person name="Narusaka M."/>
            <person name="Seki M."/>
            <person name="Sakurai T."/>
            <person name="Satou M."/>
            <person name="Tamse R."/>
            <person name="Vaysberg M."/>
            <person name="Wallender E.K."/>
            <person name="Wong C."/>
            <person name="Yamamura Y."/>
            <person name="Yuan S."/>
            <person name="Shinozaki K."/>
            <person name="Davis R.W."/>
            <person name="Theologis A."/>
            <person name="Ecker J.R."/>
        </authorList>
    </citation>
    <scope>NUCLEOTIDE SEQUENCE [LARGE SCALE MRNA]</scope>
    <source>
        <strain>cv. Columbia</strain>
    </source>
</reference>
<feature type="chain" id="PRO_0000133670" description="WRKY transcription factor 28">
    <location>
        <begin position="1"/>
        <end position="318"/>
    </location>
</feature>
<feature type="DNA-binding region" description="WRKY" evidence="2">
    <location>
        <begin position="166"/>
        <end position="231"/>
    </location>
</feature>
<feature type="region of interest" description="Disordered" evidence="3">
    <location>
        <begin position="74"/>
        <end position="158"/>
    </location>
</feature>
<feature type="compositionally biased region" description="Polar residues" evidence="3">
    <location>
        <begin position="74"/>
        <end position="84"/>
    </location>
</feature>
<feature type="compositionally biased region" description="Polar residues" evidence="3">
    <location>
        <begin position="106"/>
        <end position="115"/>
    </location>
</feature>
<feature type="compositionally biased region" description="Basic and acidic residues" evidence="3">
    <location>
        <begin position="116"/>
        <end position="126"/>
    </location>
</feature>
<feature type="compositionally biased region" description="Basic and acidic residues" evidence="3">
    <location>
        <begin position="148"/>
        <end position="158"/>
    </location>
</feature>
<organism>
    <name type="scientific">Arabidopsis thaliana</name>
    <name type="common">Mouse-ear cress</name>
    <dbReference type="NCBI Taxonomy" id="3702"/>
    <lineage>
        <taxon>Eukaryota</taxon>
        <taxon>Viridiplantae</taxon>
        <taxon>Streptophyta</taxon>
        <taxon>Embryophyta</taxon>
        <taxon>Tracheophyta</taxon>
        <taxon>Spermatophyta</taxon>
        <taxon>Magnoliopsida</taxon>
        <taxon>eudicotyledons</taxon>
        <taxon>Gunneridae</taxon>
        <taxon>Pentapetalae</taxon>
        <taxon>rosids</taxon>
        <taxon>malvids</taxon>
        <taxon>Brassicales</taxon>
        <taxon>Brassicaceae</taxon>
        <taxon>Camelineae</taxon>
        <taxon>Arabidopsis</taxon>
    </lineage>
</organism>
<keyword id="KW-0238">DNA-binding</keyword>
<keyword id="KW-0539">Nucleus</keyword>
<keyword id="KW-1185">Reference proteome</keyword>
<keyword id="KW-0804">Transcription</keyword>
<keyword id="KW-0805">Transcription regulation</keyword>
<protein>
    <recommendedName>
        <fullName>WRKY transcription factor 28</fullName>
    </recommendedName>
    <alternativeName>
        <fullName>WRKY DNA-binding protein 28</fullName>
    </alternativeName>
</protein>
<evidence type="ECO:0000250" key="1"/>
<evidence type="ECO:0000255" key="2">
    <source>
        <dbReference type="PROSITE-ProRule" id="PRU00223"/>
    </source>
</evidence>
<evidence type="ECO:0000256" key="3">
    <source>
        <dbReference type="SAM" id="MobiDB-lite"/>
    </source>
</evidence>
<evidence type="ECO:0000305" key="4"/>
<name>WRK28_ARATH</name>
<gene>
    <name type="primary">WRKY28</name>
    <name type="ordered locus">At4g18170</name>
    <name type="ORF">F15J5.1</name>
    <name type="ORF">T9A21.10</name>
</gene>
<comment type="function">
    <text evidence="1">Transcription factor. Interacts specifically with the W box (5'-(T)TGAC[CT]-3'), a frequently occurring elicitor-responsive cis-acting element (By similarity).</text>
</comment>
<comment type="subcellular location">
    <subcellularLocation>
        <location evidence="4">Nucleus</location>
    </subcellularLocation>
</comment>
<comment type="similarity">
    <text evidence="4">Belongs to the WRKY group II-c family.</text>
</comment>
<comment type="sequence caution" evidence="4">
    <conflict type="erroneous gene model prediction">
        <sequence resource="EMBL-CDS" id="CAA16788"/>
    </conflict>
</comment>
<comment type="sequence caution" evidence="4">
    <conflict type="erroneous gene model prediction">
        <sequence resource="EMBL-CDS" id="CAB78819"/>
    </conflict>
</comment>
<accession>Q8VWJ2</accession>
<accession>O49720</accession>
<dbReference type="EMBL" id="AF442393">
    <property type="protein sequence ID" value="AAL35286.1"/>
    <property type="molecule type" value="mRNA"/>
</dbReference>
<dbReference type="EMBL" id="AL021713">
    <property type="protein sequence ID" value="CAA16788.1"/>
    <property type="status" value="ALT_SEQ"/>
    <property type="molecule type" value="Genomic_DNA"/>
</dbReference>
<dbReference type="EMBL" id="AL161548">
    <property type="protein sequence ID" value="CAB78819.1"/>
    <property type="status" value="ALT_SEQ"/>
    <property type="molecule type" value="Genomic_DNA"/>
</dbReference>
<dbReference type="EMBL" id="CP002687">
    <property type="protein sequence ID" value="AEE84006.1"/>
    <property type="molecule type" value="Genomic_DNA"/>
</dbReference>
<dbReference type="EMBL" id="AY070761">
    <property type="protein sequence ID" value="AAL50099.1"/>
    <property type="molecule type" value="mRNA"/>
</dbReference>
<dbReference type="EMBL" id="AY116943">
    <property type="protein sequence ID" value="AAM51577.1"/>
    <property type="molecule type" value="mRNA"/>
</dbReference>
<dbReference type="PIR" id="T04919">
    <property type="entry name" value="T04919"/>
</dbReference>
<dbReference type="RefSeq" id="NP_193551.1">
    <property type="nucleotide sequence ID" value="NM_117927.3"/>
</dbReference>
<dbReference type="SMR" id="Q8VWJ2"/>
<dbReference type="BioGRID" id="12835">
    <property type="interactions" value="13"/>
</dbReference>
<dbReference type="FunCoup" id="Q8VWJ2">
    <property type="interactions" value="5"/>
</dbReference>
<dbReference type="IntAct" id="Q8VWJ2">
    <property type="interactions" value="6"/>
</dbReference>
<dbReference type="STRING" id="3702.Q8VWJ2"/>
<dbReference type="iPTMnet" id="Q8VWJ2"/>
<dbReference type="PaxDb" id="3702-AT4G18170.1"/>
<dbReference type="ProteomicsDB" id="234388"/>
<dbReference type="EnsemblPlants" id="AT4G18170.1">
    <property type="protein sequence ID" value="AT4G18170.1"/>
    <property type="gene ID" value="AT4G18170"/>
</dbReference>
<dbReference type="GeneID" id="827542"/>
<dbReference type="Gramene" id="AT4G18170.1">
    <property type="protein sequence ID" value="AT4G18170.1"/>
    <property type="gene ID" value="AT4G18170"/>
</dbReference>
<dbReference type="KEGG" id="ath:AT4G18170"/>
<dbReference type="Araport" id="AT4G18170"/>
<dbReference type="TAIR" id="AT4G18170">
    <property type="gene designation" value="WRKY28"/>
</dbReference>
<dbReference type="eggNOG" id="ENOG502QQYS">
    <property type="taxonomic scope" value="Eukaryota"/>
</dbReference>
<dbReference type="HOGENOM" id="CLU_033779_2_0_1"/>
<dbReference type="InParanoid" id="Q8VWJ2"/>
<dbReference type="OMA" id="GCHEEDS"/>
<dbReference type="OrthoDB" id="1936515at2759"/>
<dbReference type="PhylomeDB" id="Q8VWJ2"/>
<dbReference type="PRO" id="PR:Q8VWJ2"/>
<dbReference type="Proteomes" id="UP000006548">
    <property type="component" value="Chromosome 4"/>
</dbReference>
<dbReference type="ExpressionAtlas" id="Q8VWJ2">
    <property type="expression patterns" value="baseline and differential"/>
</dbReference>
<dbReference type="GO" id="GO:0005634">
    <property type="term" value="C:nucleus"/>
    <property type="evidence" value="ECO:0007669"/>
    <property type="project" value="UniProtKB-SubCell"/>
</dbReference>
<dbReference type="GO" id="GO:0003700">
    <property type="term" value="F:DNA-binding transcription factor activity"/>
    <property type="evidence" value="ECO:0000314"/>
    <property type="project" value="TAIR"/>
</dbReference>
<dbReference type="GO" id="GO:0043565">
    <property type="term" value="F:sequence-specific DNA binding"/>
    <property type="evidence" value="ECO:0000314"/>
    <property type="project" value="TAIR"/>
</dbReference>
<dbReference type="GO" id="GO:1900057">
    <property type="term" value="P:positive regulation of leaf senescence"/>
    <property type="evidence" value="ECO:0000315"/>
    <property type="project" value="TAIR"/>
</dbReference>
<dbReference type="GO" id="GO:0042659">
    <property type="term" value="P:regulation of cell fate specification"/>
    <property type="evidence" value="ECO:0000315"/>
    <property type="project" value="TAIR"/>
</dbReference>
<dbReference type="FunFam" id="2.20.25.80:FF:000003">
    <property type="entry name" value="WRKY transcription factor 57"/>
    <property type="match status" value="1"/>
</dbReference>
<dbReference type="Gene3D" id="2.20.25.80">
    <property type="entry name" value="WRKY domain"/>
    <property type="match status" value="1"/>
</dbReference>
<dbReference type="InterPro" id="IPR017396">
    <property type="entry name" value="TF_WRKY_IIc"/>
</dbReference>
<dbReference type="InterPro" id="IPR003657">
    <property type="entry name" value="WRKY_dom"/>
</dbReference>
<dbReference type="InterPro" id="IPR036576">
    <property type="entry name" value="WRKY_dom_sf"/>
</dbReference>
<dbReference type="InterPro" id="IPR044810">
    <property type="entry name" value="WRKY_plant"/>
</dbReference>
<dbReference type="PANTHER" id="PTHR31221:SF325">
    <property type="entry name" value="WRKY TRANSCRIPTION FACTOR 28"/>
    <property type="match status" value="1"/>
</dbReference>
<dbReference type="PANTHER" id="PTHR31221">
    <property type="entry name" value="WRKY TRANSCRIPTION FACTOR PROTEIN 1-RELATED"/>
    <property type="match status" value="1"/>
</dbReference>
<dbReference type="Pfam" id="PF03106">
    <property type="entry name" value="WRKY"/>
    <property type="match status" value="1"/>
</dbReference>
<dbReference type="PIRSF" id="PIRSF038130">
    <property type="entry name" value="TF_WRKY_IIc"/>
    <property type="match status" value="1"/>
</dbReference>
<dbReference type="SMART" id="SM00774">
    <property type="entry name" value="WRKY"/>
    <property type="match status" value="1"/>
</dbReference>
<dbReference type="SUPFAM" id="SSF118290">
    <property type="entry name" value="WRKY DNA-binding domain"/>
    <property type="match status" value="1"/>
</dbReference>
<dbReference type="PROSITE" id="PS50811">
    <property type="entry name" value="WRKY"/>
    <property type="match status" value="1"/>
</dbReference>
<sequence>MSNETRDLYNYQYPSSFSLHEMMNLPTSNPSSYGNLPSQNGFNPSTYSFTDCLQSSPAAYESLLQKTFGLSPSSSEVFNSSIDQEPNRDVTNDVINGGACNETETRVSPSNSSSSEADHPGEDSGKSRRKRELVGEEDQISKKVGKTKKTEVKKQREPRVSFMTKSEVDHLEDGYRWRKYGQKAVKNSPYPRSYYRCTTQKCNVKKRVERSFQDPTVVITTYEGQHNHPIPTNLRGSSAAAAMFSADLMTPRSFAHDMFRTAAYTNGGSVAAALDYGYGQSGYGSVNSNPSSHQVYHQGGEYELLREIFPSIFFKQEP</sequence>